<feature type="signal peptide" evidence="3">
    <location>
        <begin position="1"/>
        <end position="22"/>
    </location>
</feature>
<feature type="chain" id="PRO_0000401326" description="G-type lectin S-receptor-like serine/threonine-protein kinase At2g19130">
    <location>
        <begin position="23"/>
        <end position="828"/>
    </location>
</feature>
<feature type="topological domain" description="Extracellular" evidence="3">
    <location>
        <begin position="23"/>
        <end position="439"/>
    </location>
</feature>
<feature type="transmembrane region" description="Helical" evidence="3">
    <location>
        <begin position="440"/>
        <end position="460"/>
    </location>
</feature>
<feature type="topological domain" description="Cytoplasmic" evidence="3">
    <location>
        <begin position="461"/>
        <end position="828"/>
    </location>
</feature>
<feature type="domain" description="Bulb-type lectin" evidence="4">
    <location>
        <begin position="23"/>
        <end position="146"/>
    </location>
</feature>
<feature type="domain" description="EGF-like">
    <location>
        <begin position="286"/>
        <end position="322"/>
    </location>
</feature>
<feature type="domain" description="PAN" evidence="6">
    <location>
        <begin position="341"/>
        <end position="422"/>
    </location>
</feature>
<feature type="domain" description="Protein kinase" evidence="5">
    <location>
        <begin position="493"/>
        <end position="770"/>
    </location>
</feature>
<feature type="region of interest" description="CaM-binding" evidence="1">
    <location>
        <begin position="582"/>
        <end position="600"/>
    </location>
</feature>
<feature type="region of interest" description="Disordered" evidence="8">
    <location>
        <begin position="796"/>
        <end position="828"/>
    </location>
</feature>
<feature type="compositionally biased region" description="Low complexity" evidence="8">
    <location>
        <begin position="797"/>
        <end position="828"/>
    </location>
</feature>
<feature type="active site" description="Proton acceptor" evidence="5 7">
    <location>
        <position position="619"/>
    </location>
</feature>
<feature type="binding site" evidence="5">
    <location>
        <begin position="499"/>
        <end position="507"/>
    </location>
    <ligand>
        <name>ATP</name>
        <dbReference type="ChEBI" id="CHEBI:30616"/>
    </ligand>
</feature>
<feature type="binding site" evidence="5">
    <location>
        <position position="521"/>
    </location>
    <ligand>
        <name>ATP</name>
        <dbReference type="ChEBI" id="CHEBI:30616"/>
    </ligand>
</feature>
<feature type="modified residue" description="Phosphoserine" evidence="2">
    <location>
        <position position="527"/>
    </location>
</feature>
<feature type="modified residue" description="Phosphothreonine" evidence="2">
    <location>
        <position position="653"/>
    </location>
</feature>
<feature type="modified residue" description="Phosphoserine" evidence="2">
    <location>
        <position position="815"/>
    </location>
</feature>
<feature type="glycosylation site" description="N-linked (GlcNAc...) asparagine" evidence="3">
    <location>
        <position position="85"/>
    </location>
</feature>
<feature type="glycosylation site" description="N-linked (GlcNAc...) asparagine" evidence="3">
    <location>
        <position position="113"/>
    </location>
</feature>
<feature type="glycosylation site" description="N-linked (GlcNAc...) asparagine" evidence="3">
    <location>
        <position position="203"/>
    </location>
</feature>
<feature type="glycosylation site" description="N-linked (GlcNAc...) asparagine" evidence="3">
    <location>
        <position position="234"/>
    </location>
</feature>
<feature type="glycosylation site" description="N-linked (GlcNAc...) asparagine" evidence="3">
    <location>
        <position position="240"/>
    </location>
</feature>
<feature type="glycosylation site" description="N-linked (GlcNAc...) asparagine" evidence="3">
    <location>
        <position position="255"/>
    </location>
</feature>
<feature type="disulfide bond" evidence="1">
    <location>
        <begin position="290"/>
        <end position="302"/>
    </location>
</feature>
<feature type="disulfide bond" evidence="1">
    <location>
        <begin position="296"/>
        <end position="310"/>
    </location>
</feature>
<feature type="disulfide bond" evidence="1">
    <location>
        <begin position="372"/>
        <end position="394"/>
    </location>
</feature>
<feature type="disulfide bond" evidence="1">
    <location>
        <begin position="376"/>
        <end position="382"/>
    </location>
</feature>
<dbReference type="EC" id="2.7.11.1"/>
<dbReference type="EMBL" id="AC002392">
    <property type="protein sequence ID" value="AAD12030.1"/>
    <property type="molecule type" value="Genomic_DNA"/>
</dbReference>
<dbReference type="EMBL" id="CP002685">
    <property type="protein sequence ID" value="AEC06850.1"/>
    <property type="molecule type" value="Genomic_DNA"/>
</dbReference>
<dbReference type="EMBL" id="AK226189">
    <property type="protein sequence ID" value="BAE98354.1"/>
    <property type="molecule type" value="mRNA"/>
</dbReference>
<dbReference type="PIR" id="T00534">
    <property type="entry name" value="T00534"/>
</dbReference>
<dbReference type="RefSeq" id="NP_179503.1">
    <property type="nucleotide sequence ID" value="NM_127470.4"/>
</dbReference>
<dbReference type="SMR" id="O64477"/>
<dbReference type="BioGRID" id="1787">
    <property type="interactions" value="1"/>
</dbReference>
<dbReference type="FunCoup" id="O64477">
    <property type="interactions" value="262"/>
</dbReference>
<dbReference type="IntAct" id="O64477">
    <property type="interactions" value="1"/>
</dbReference>
<dbReference type="STRING" id="3702.O64477"/>
<dbReference type="GlyGen" id="O64477">
    <property type="glycosylation" value="6 sites"/>
</dbReference>
<dbReference type="iPTMnet" id="O64477"/>
<dbReference type="PaxDb" id="3702-AT2G19130.1"/>
<dbReference type="ProteomicsDB" id="232353"/>
<dbReference type="EnsemblPlants" id="AT2G19130.1">
    <property type="protein sequence ID" value="AT2G19130.1"/>
    <property type="gene ID" value="AT2G19130"/>
</dbReference>
<dbReference type="GeneID" id="816430"/>
<dbReference type="Gramene" id="AT2G19130.1">
    <property type="protein sequence ID" value="AT2G19130.1"/>
    <property type="gene ID" value="AT2G19130"/>
</dbReference>
<dbReference type="KEGG" id="ath:AT2G19130"/>
<dbReference type="Araport" id="AT2G19130"/>
<dbReference type="TAIR" id="AT2G19130"/>
<dbReference type="eggNOG" id="ENOG502QUMK">
    <property type="taxonomic scope" value="Eukaryota"/>
</dbReference>
<dbReference type="HOGENOM" id="CLU_000288_116_2_1"/>
<dbReference type="InParanoid" id="O64477"/>
<dbReference type="OMA" id="WNATRVY"/>
<dbReference type="PhylomeDB" id="O64477"/>
<dbReference type="PRO" id="PR:O64477"/>
<dbReference type="Proteomes" id="UP000006548">
    <property type="component" value="Chromosome 2"/>
</dbReference>
<dbReference type="ExpressionAtlas" id="O64477">
    <property type="expression patterns" value="baseline and differential"/>
</dbReference>
<dbReference type="GO" id="GO:0005886">
    <property type="term" value="C:plasma membrane"/>
    <property type="evidence" value="ECO:0007669"/>
    <property type="project" value="UniProtKB-SubCell"/>
</dbReference>
<dbReference type="GO" id="GO:0005524">
    <property type="term" value="F:ATP binding"/>
    <property type="evidence" value="ECO:0007669"/>
    <property type="project" value="UniProtKB-KW"/>
</dbReference>
<dbReference type="GO" id="GO:0005516">
    <property type="term" value="F:calmodulin binding"/>
    <property type="evidence" value="ECO:0000250"/>
    <property type="project" value="UniProtKB"/>
</dbReference>
<dbReference type="GO" id="GO:0030246">
    <property type="term" value="F:carbohydrate binding"/>
    <property type="evidence" value="ECO:0007669"/>
    <property type="project" value="UniProtKB-KW"/>
</dbReference>
<dbReference type="GO" id="GO:0106310">
    <property type="term" value="F:protein serine kinase activity"/>
    <property type="evidence" value="ECO:0007669"/>
    <property type="project" value="RHEA"/>
</dbReference>
<dbReference type="GO" id="GO:0004674">
    <property type="term" value="F:protein serine/threonine kinase activity"/>
    <property type="evidence" value="ECO:0000250"/>
    <property type="project" value="UniProtKB"/>
</dbReference>
<dbReference type="GO" id="GO:0031625">
    <property type="term" value="F:ubiquitin protein ligase binding"/>
    <property type="evidence" value="ECO:0007669"/>
    <property type="project" value="UniProtKB-ARBA"/>
</dbReference>
<dbReference type="GO" id="GO:0048544">
    <property type="term" value="P:recognition of pollen"/>
    <property type="evidence" value="ECO:0007669"/>
    <property type="project" value="InterPro"/>
</dbReference>
<dbReference type="CDD" id="cd00028">
    <property type="entry name" value="B_lectin"/>
    <property type="match status" value="1"/>
</dbReference>
<dbReference type="CDD" id="cd01098">
    <property type="entry name" value="PAN_AP_plant"/>
    <property type="match status" value="1"/>
</dbReference>
<dbReference type="CDD" id="cd14066">
    <property type="entry name" value="STKc_IRAK"/>
    <property type="match status" value="1"/>
</dbReference>
<dbReference type="FunFam" id="3.30.200.20:FF:000370">
    <property type="entry name" value="Receptor-like protein kinase 4"/>
    <property type="match status" value="1"/>
</dbReference>
<dbReference type="FunFam" id="1.10.510.10:FF:000227">
    <property type="entry name" value="Serine/threonine-protein kinase"/>
    <property type="match status" value="1"/>
</dbReference>
<dbReference type="Gene3D" id="2.90.10.10">
    <property type="entry name" value="Bulb-type lectin domain"/>
    <property type="match status" value="1"/>
</dbReference>
<dbReference type="Gene3D" id="3.30.200.20">
    <property type="entry name" value="Phosphorylase Kinase, domain 1"/>
    <property type="match status" value="1"/>
</dbReference>
<dbReference type="Gene3D" id="1.10.510.10">
    <property type="entry name" value="Transferase(Phosphotransferase) domain 1"/>
    <property type="match status" value="1"/>
</dbReference>
<dbReference type="InterPro" id="IPR001480">
    <property type="entry name" value="Bulb-type_lectin_dom"/>
</dbReference>
<dbReference type="InterPro" id="IPR036426">
    <property type="entry name" value="Bulb-type_lectin_dom_sf"/>
</dbReference>
<dbReference type="InterPro" id="IPR011009">
    <property type="entry name" value="Kinase-like_dom_sf"/>
</dbReference>
<dbReference type="InterPro" id="IPR003609">
    <property type="entry name" value="Pan_app"/>
</dbReference>
<dbReference type="InterPro" id="IPR000719">
    <property type="entry name" value="Prot_kinase_dom"/>
</dbReference>
<dbReference type="InterPro" id="IPR017441">
    <property type="entry name" value="Protein_kinase_ATP_BS"/>
</dbReference>
<dbReference type="InterPro" id="IPR000858">
    <property type="entry name" value="S_locus_glycoprot_dom"/>
</dbReference>
<dbReference type="InterPro" id="IPR008271">
    <property type="entry name" value="Ser/Thr_kinase_AS"/>
</dbReference>
<dbReference type="InterPro" id="IPR024171">
    <property type="entry name" value="SRK-like_kinase"/>
</dbReference>
<dbReference type="PANTHER" id="PTHR47974">
    <property type="entry name" value="OS07G0415500 PROTEIN"/>
    <property type="match status" value="1"/>
</dbReference>
<dbReference type="PANTHER" id="PTHR47974:SF19">
    <property type="entry name" value="RECEPTOR-LIKE SERINE_THREONINE-PROTEIN KINASE"/>
    <property type="match status" value="1"/>
</dbReference>
<dbReference type="Pfam" id="PF01453">
    <property type="entry name" value="B_lectin"/>
    <property type="match status" value="1"/>
</dbReference>
<dbReference type="Pfam" id="PF08276">
    <property type="entry name" value="PAN_2"/>
    <property type="match status" value="1"/>
</dbReference>
<dbReference type="Pfam" id="PF00069">
    <property type="entry name" value="Pkinase"/>
    <property type="match status" value="1"/>
</dbReference>
<dbReference type="Pfam" id="PF00954">
    <property type="entry name" value="S_locus_glycop"/>
    <property type="match status" value="1"/>
</dbReference>
<dbReference type="PIRSF" id="PIRSF000641">
    <property type="entry name" value="SRK"/>
    <property type="match status" value="1"/>
</dbReference>
<dbReference type="SMART" id="SM00108">
    <property type="entry name" value="B_lectin"/>
    <property type="match status" value="1"/>
</dbReference>
<dbReference type="SMART" id="SM00473">
    <property type="entry name" value="PAN_AP"/>
    <property type="match status" value="1"/>
</dbReference>
<dbReference type="SMART" id="SM00220">
    <property type="entry name" value="S_TKc"/>
    <property type="match status" value="1"/>
</dbReference>
<dbReference type="SUPFAM" id="SSF51110">
    <property type="entry name" value="alpha-D-mannose-specific plant lectins"/>
    <property type="match status" value="1"/>
</dbReference>
<dbReference type="SUPFAM" id="SSF57414">
    <property type="entry name" value="Hairpin loop containing domain-like"/>
    <property type="match status" value="1"/>
</dbReference>
<dbReference type="SUPFAM" id="SSF56112">
    <property type="entry name" value="Protein kinase-like (PK-like)"/>
    <property type="match status" value="1"/>
</dbReference>
<dbReference type="PROSITE" id="PS50927">
    <property type="entry name" value="BULB_LECTIN"/>
    <property type="match status" value="1"/>
</dbReference>
<dbReference type="PROSITE" id="PS50948">
    <property type="entry name" value="PAN"/>
    <property type="match status" value="1"/>
</dbReference>
<dbReference type="PROSITE" id="PS00107">
    <property type="entry name" value="PROTEIN_KINASE_ATP"/>
    <property type="match status" value="1"/>
</dbReference>
<dbReference type="PROSITE" id="PS50011">
    <property type="entry name" value="PROTEIN_KINASE_DOM"/>
    <property type="match status" value="1"/>
</dbReference>
<dbReference type="PROSITE" id="PS00108">
    <property type="entry name" value="PROTEIN_KINASE_ST"/>
    <property type="match status" value="1"/>
</dbReference>
<proteinExistence type="evidence at transcript level"/>
<sequence>MVSFLTLTSFFFICFFIHGSSAVDTISGDFTLSGDQTIVSSDGTYEMGFFKPGSSSNFYIGMWYKQLSQTILWVANRDKAVSDKNSSVFKISNGNLILLDGNYQTPVWSTGLNSTSSVSALEAVLQDDGNLVLRTGGSSLSANVLWQSFDHPGDTWLPGVKIRLDKRTGKSQRLTSWKSLEDPSPGLFSLELDESTAYKILWNGSNEYWSSGPWNPQSRIFDSVPEMRLNYIYNFSFFSNTTDSYFTYSIYNQLNVSRFVMDVSGQIKQFTWLEGNKAWNLFWSQPRQQCQVYRYCGSFGICSDKSEPFCRCPQGFRPMSQKDWDLKDYSAGCVRKTELQCSRGDINQFFRLPNMKLADNSEVLTRTSLSICASACQGDCSCKAYAYDEGSSKCLVWSKDVLNLQQLEDENSEGNIFYLRLAASDVPNVGASGKSNNKGLIFGAVLGSLGVIVLVLLVVILILRYRRRKRMRGEKGDGTLSAFSYRELQNATKNFSDKLGGGGFGSVFKGALPDSSDIAVKRLEGISQGEKQFRTEVVTIGTIQHVNLVRLRGFCSEGSKKLLVYDYMPNGSLDSHLFLNQVEEKIVLGWKLRFQIALGTARGLAYLHDECRDCIIHCDIKPENILLDSQFCPKVADFGLAKLVGRDFSRVLTTMRGTRGYLAPEWISGVAITAKADVYSYGMMLFELVSGRRNTEQSENEKVRFFPSWAATILTKDGDIRSLVDPRLEGDAVDIEEVTRACKVACWCIQDEESHRPAMSQVVQILEGVLEVNPPPFPRSIQALVVSDEDVVFFTESSSSSSHNSSQNHKHSSSSSSSKKMTNDNSSA</sequence>
<protein>
    <recommendedName>
        <fullName>G-type lectin S-receptor-like serine/threonine-protein kinase At2g19130</fullName>
        <ecNumber>2.7.11.1</ecNumber>
    </recommendedName>
</protein>
<name>Y2913_ARATH</name>
<comment type="catalytic activity">
    <reaction>
        <text>L-seryl-[protein] + ATP = O-phospho-L-seryl-[protein] + ADP + H(+)</text>
        <dbReference type="Rhea" id="RHEA:17989"/>
        <dbReference type="Rhea" id="RHEA-COMP:9863"/>
        <dbReference type="Rhea" id="RHEA-COMP:11604"/>
        <dbReference type="ChEBI" id="CHEBI:15378"/>
        <dbReference type="ChEBI" id="CHEBI:29999"/>
        <dbReference type="ChEBI" id="CHEBI:30616"/>
        <dbReference type="ChEBI" id="CHEBI:83421"/>
        <dbReference type="ChEBI" id="CHEBI:456216"/>
        <dbReference type="EC" id="2.7.11.1"/>
    </reaction>
</comment>
<comment type="catalytic activity">
    <reaction>
        <text>L-threonyl-[protein] + ATP = O-phospho-L-threonyl-[protein] + ADP + H(+)</text>
        <dbReference type="Rhea" id="RHEA:46608"/>
        <dbReference type="Rhea" id="RHEA-COMP:11060"/>
        <dbReference type="Rhea" id="RHEA-COMP:11605"/>
        <dbReference type="ChEBI" id="CHEBI:15378"/>
        <dbReference type="ChEBI" id="CHEBI:30013"/>
        <dbReference type="ChEBI" id="CHEBI:30616"/>
        <dbReference type="ChEBI" id="CHEBI:61977"/>
        <dbReference type="ChEBI" id="CHEBI:456216"/>
        <dbReference type="EC" id="2.7.11.1"/>
    </reaction>
</comment>
<comment type="subcellular location">
    <subcellularLocation>
        <location evidence="1">Cell membrane</location>
        <topology evidence="1">Single-pass type I membrane protein</topology>
    </subcellularLocation>
</comment>
<comment type="similarity">
    <text evidence="5">Belongs to the protein kinase superfamily. Ser/Thr protein kinase family.</text>
</comment>
<keyword id="KW-0067">ATP-binding</keyword>
<keyword id="KW-1003">Cell membrane</keyword>
<keyword id="KW-1015">Disulfide bond</keyword>
<keyword id="KW-0245">EGF-like domain</keyword>
<keyword id="KW-0325">Glycoprotein</keyword>
<keyword id="KW-0418">Kinase</keyword>
<keyword id="KW-0430">Lectin</keyword>
<keyword id="KW-0472">Membrane</keyword>
<keyword id="KW-0547">Nucleotide-binding</keyword>
<keyword id="KW-0597">Phosphoprotein</keyword>
<keyword id="KW-0675">Receptor</keyword>
<keyword id="KW-1185">Reference proteome</keyword>
<keyword id="KW-0723">Serine/threonine-protein kinase</keyword>
<keyword id="KW-0732">Signal</keyword>
<keyword id="KW-0808">Transferase</keyword>
<keyword id="KW-0812">Transmembrane</keyword>
<keyword id="KW-1133">Transmembrane helix</keyword>
<evidence type="ECO:0000250" key="1"/>
<evidence type="ECO:0000250" key="2">
    <source>
        <dbReference type="UniProtKB" id="Q9LPZ9"/>
    </source>
</evidence>
<evidence type="ECO:0000255" key="3"/>
<evidence type="ECO:0000255" key="4">
    <source>
        <dbReference type="PROSITE-ProRule" id="PRU00038"/>
    </source>
</evidence>
<evidence type="ECO:0000255" key="5">
    <source>
        <dbReference type="PROSITE-ProRule" id="PRU00159"/>
    </source>
</evidence>
<evidence type="ECO:0000255" key="6">
    <source>
        <dbReference type="PROSITE-ProRule" id="PRU00315"/>
    </source>
</evidence>
<evidence type="ECO:0000255" key="7">
    <source>
        <dbReference type="PROSITE-ProRule" id="PRU10027"/>
    </source>
</evidence>
<evidence type="ECO:0000256" key="8">
    <source>
        <dbReference type="SAM" id="MobiDB-lite"/>
    </source>
</evidence>
<gene>
    <name type="ordered locus">At2g19130</name>
    <name type="ORF">T20K24.15</name>
</gene>
<accession>O64477</accession>
<accession>Q0WWZ4</accession>
<reference key="1">
    <citation type="journal article" date="1999" name="Nature">
        <title>Sequence and analysis of chromosome 2 of the plant Arabidopsis thaliana.</title>
        <authorList>
            <person name="Lin X."/>
            <person name="Kaul S."/>
            <person name="Rounsley S.D."/>
            <person name="Shea T.P."/>
            <person name="Benito M.-I."/>
            <person name="Town C.D."/>
            <person name="Fujii C.Y."/>
            <person name="Mason T.M."/>
            <person name="Bowman C.L."/>
            <person name="Barnstead M.E."/>
            <person name="Feldblyum T.V."/>
            <person name="Buell C.R."/>
            <person name="Ketchum K.A."/>
            <person name="Lee J.J."/>
            <person name="Ronning C.M."/>
            <person name="Koo H.L."/>
            <person name="Moffat K.S."/>
            <person name="Cronin L.A."/>
            <person name="Shen M."/>
            <person name="Pai G."/>
            <person name="Van Aken S."/>
            <person name="Umayam L."/>
            <person name="Tallon L.J."/>
            <person name="Gill J.E."/>
            <person name="Adams M.D."/>
            <person name="Carrera A.J."/>
            <person name="Creasy T.H."/>
            <person name="Goodman H.M."/>
            <person name="Somerville C.R."/>
            <person name="Copenhaver G.P."/>
            <person name="Preuss D."/>
            <person name="Nierman W.C."/>
            <person name="White O."/>
            <person name="Eisen J.A."/>
            <person name="Salzberg S.L."/>
            <person name="Fraser C.M."/>
            <person name="Venter J.C."/>
        </authorList>
    </citation>
    <scope>NUCLEOTIDE SEQUENCE [LARGE SCALE GENOMIC DNA]</scope>
    <source>
        <strain>cv. Columbia</strain>
    </source>
</reference>
<reference key="2">
    <citation type="journal article" date="2017" name="Plant J.">
        <title>Araport11: a complete reannotation of the Arabidopsis thaliana reference genome.</title>
        <authorList>
            <person name="Cheng C.Y."/>
            <person name="Krishnakumar V."/>
            <person name="Chan A.P."/>
            <person name="Thibaud-Nissen F."/>
            <person name="Schobel S."/>
            <person name="Town C.D."/>
        </authorList>
    </citation>
    <scope>GENOME REANNOTATION</scope>
    <source>
        <strain>cv. Columbia</strain>
    </source>
</reference>
<reference key="3">
    <citation type="submission" date="2006-07" db="EMBL/GenBank/DDBJ databases">
        <title>Large-scale analysis of RIKEN Arabidopsis full-length (RAFL) cDNAs.</title>
        <authorList>
            <person name="Totoki Y."/>
            <person name="Seki M."/>
            <person name="Ishida J."/>
            <person name="Nakajima M."/>
            <person name="Enju A."/>
            <person name="Kamiya A."/>
            <person name="Narusaka M."/>
            <person name="Shin-i T."/>
            <person name="Nakagawa M."/>
            <person name="Sakamoto N."/>
            <person name="Oishi K."/>
            <person name="Kohara Y."/>
            <person name="Kobayashi M."/>
            <person name="Toyoda A."/>
            <person name="Sakaki Y."/>
            <person name="Sakurai T."/>
            <person name="Iida K."/>
            <person name="Akiyama K."/>
            <person name="Satou M."/>
            <person name="Toyoda T."/>
            <person name="Konagaya A."/>
            <person name="Carninci P."/>
            <person name="Kawai J."/>
            <person name="Hayashizaki Y."/>
            <person name="Shinozaki K."/>
        </authorList>
    </citation>
    <scope>NUCLEOTIDE SEQUENCE [LARGE SCALE MRNA] OF 1-189</scope>
    <source>
        <strain>cv. Columbia</strain>
    </source>
</reference>
<organism>
    <name type="scientific">Arabidopsis thaliana</name>
    <name type="common">Mouse-ear cress</name>
    <dbReference type="NCBI Taxonomy" id="3702"/>
    <lineage>
        <taxon>Eukaryota</taxon>
        <taxon>Viridiplantae</taxon>
        <taxon>Streptophyta</taxon>
        <taxon>Embryophyta</taxon>
        <taxon>Tracheophyta</taxon>
        <taxon>Spermatophyta</taxon>
        <taxon>Magnoliopsida</taxon>
        <taxon>eudicotyledons</taxon>
        <taxon>Gunneridae</taxon>
        <taxon>Pentapetalae</taxon>
        <taxon>rosids</taxon>
        <taxon>malvids</taxon>
        <taxon>Brassicales</taxon>
        <taxon>Brassicaceae</taxon>
        <taxon>Camelineae</taxon>
        <taxon>Arabidopsis</taxon>
    </lineage>
</organism>